<organism>
    <name type="scientific">Psychrobacter arcticus (strain DSM 17307 / VKM B-2377 / 273-4)</name>
    <dbReference type="NCBI Taxonomy" id="259536"/>
    <lineage>
        <taxon>Bacteria</taxon>
        <taxon>Pseudomonadati</taxon>
        <taxon>Pseudomonadota</taxon>
        <taxon>Gammaproteobacteria</taxon>
        <taxon>Moraxellales</taxon>
        <taxon>Moraxellaceae</taxon>
        <taxon>Psychrobacter</taxon>
    </lineage>
</organism>
<proteinExistence type="inferred from homology"/>
<name>RL6_PSYA2</name>
<keyword id="KW-1185">Reference proteome</keyword>
<keyword id="KW-0687">Ribonucleoprotein</keyword>
<keyword id="KW-0689">Ribosomal protein</keyword>
<keyword id="KW-0694">RNA-binding</keyword>
<keyword id="KW-0699">rRNA-binding</keyword>
<evidence type="ECO:0000255" key="1">
    <source>
        <dbReference type="HAMAP-Rule" id="MF_01365"/>
    </source>
</evidence>
<evidence type="ECO:0000305" key="2"/>
<comment type="function">
    <text evidence="1">This protein binds to the 23S rRNA, and is important in its secondary structure. It is located near the subunit interface in the base of the L7/L12 stalk, and near the tRNA binding site of the peptidyltransferase center.</text>
</comment>
<comment type="subunit">
    <text evidence="1">Part of the 50S ribosomal subunit.</text>
</comment>
<comment type="similarity">
    <text evidence="1">Belongs to the universal ribosomal protein uL6 family.</text>
</comment>
<gene>
    <name evidence="1" type="primary">rplF</name>
    <name type="ordered locus">Psyc_0504</name>
</gene>
<reference key="1">
    <citation type="journal article" date="2010" name="Appl. Environ. Microbiol.">
        <title>The genome sequence of Psychrobacter arcticus 273-4, a psychroactive Siberian permafrost bacterium, reveals mechanisms for adaptation to low-temperature growth.</title>
        <authorList>
            <person name="Ayala-del-Rio H.L."/>
            <person name="Chain P.S."/>
            <person name="Grzymski J.J."/>
            <person name="Ponder M.A."/>
            <person name="Ivanova N."/>
            <person name="Bergholz P.W."/>
            <person name="Di Bartolo G."/>
            <person name="Hauser L."/>
            <person name="Land M."/>
            <person name="Bakermans C."/>
            <person name="Rodrigues D."/>
            <person name="Klappenbach J."/>
            <person name="Zarka D."/>
            <person name="Larimer F."/>
            <person name="Richardson P."/>
            <person name="Murray A."/>
            <person name="Thomashow M."/>
            <person name="Tiedje J.M."/>
        </authorList>
    </citation>
    <scope>NUCLEOTIDE SEQUENCE [LARGE SCALE GENOMIC DNA]</scope>
    <source>
        <strain>DSM 17307 / VKM B-2377 / 273-4</strain>
    </source>
</reference>
<sequence length="177" mass="19522">MSRVAKAPVTLPNGVSVTLNDRQVEVKGKNGNMSLRLHELVELKQEDDLIIFSPTVDSKEAMMHAGTMRSLLNNLVIGVNEGFEKRLLLIGVGYRAQATGNKVTLNVGYSHPVEYTLPEGVSAETPTQTEIVLKSNDKQQLGQAAANIRGFRPPEPYKGKGIRYSDEHVIRKEAKKK</sequence>
<accession>Q4FUE1</accession>
<feature type="chain" id="PRO_0000265280" description="Large ribosomal subunit protein uL6">
    <location>
        <begin position="1"/>
        <end position="177"/>
    </location>
</feature>
<dbReference type="EMBL" id="CP000082">
    <property type="protein sequence ID" value="AAZ18367.1"/>
    <property type="molecule type" value="Genomic_DNA"/>
</dbReference>
<dbReference type="RefSeq" id="WP_011279800.1">
    <property type="nucleotide sequence ID" value="NC_007204.1"/>
</dbReference>
<dbReference type="SMR" id="Q4FUE1"/>
<dbReference type="STRING" id="259536.Psyc_0504"/>
<dbReference type="KEGG" id="par:Psyc_0504"/>
<dbReference type="eggNOG" id="COG0097">
    <property type="taxonomic scope" value="Bacteria"/>
</dbReference>
<dbReference type="HOGENOM" id="CLU_065464_1_2_6"/>
<dbReference type="OrthoDB" id="9805007at2"/>
<dbReference type="Proteomes" id="UP000000546">
    <property type="component" value="Chromosome"/>
</dbReference>
<dbReference type="GO" id="GO:0022625">
    <property type="term" value="C:cytosolic large ribosomal subunit"/>
    <property type="evidence" value="ECO:0007669"/>
    <property type="project" value="TreeGrafter"/>
</dbReference>
<dbReference type="GO" id="GO:0019843">
    <property type="term" value="F:rRNA binding"/>
    <property type="evidence" value="ECO:0007669"/>
    <property type="project" value="UniProtKB-UniRule"/>
</dbReference>
<dbReference type="GO" id="GO:0003735">
    <property type="term" value="F:structural constituent of ribosome"/>
    <property type="evidence" value="ECO:0007669"/>
    <property type="project" value="InterPro"/>
</dbReference>
<dbReference type="GO" id="GO:0002181">
    <property type="term" value="P:cytoplasmic translation"/>
    <property type="evidence" value="ECO:0007669"/>
    <property type="project" value="TreeGrafter"/>
</dbReference>
<dbReference type="FunFam" id="3.90.930.12:FF:000001">
    <property type="entry name" value="50S ribosomal protein L6"/>
    <property type="match status" value="1"/>
</dbReference>
<dbReference type="FunFam" id="3.90.930.12:FF:000002">
    <property type="entry name" value="50S ribosomal protein L6"/>
    <property type="match status" value="1"/>
</dbReference>
<dbReference type="Gene3D" id="3.90.930.12">
    <property type="entry name" value="Ribosomal protein L6, alpha-beta domain"/>
    <property type="match status" value="2"/>
</dbReference>
<dbReference type="HAMAP" id="MF_01365_B">
    <property type="entry name" value="Ribosomal_uL6_B"/>
    <property type="match status" value="1"/>
</dbReference>
<dbReference type="InterPro" id="IPR000702">
    <property type="entry name" value="Ribosomal_uL6-like"/>
</dbReference>
<dbReference type="InterPro" id="IPR036789">
    <property type="entry name" value="Ribosomal_uL6-like_a/b-dom_sf"/>
</dbReference>
<dbReference type="InterPro" id="IPR020040">
    <property type="entry name" value="Ribosomal_uL6_a/b-dom"/>
</dbReference>
<dbReference type="InterPro" id="IPR019906">
    <property type="entry name" value="Ribosomal_uL6_bac-type"/>
</dbReference>
<dbReference type="InterPro" id="IPR002358">
    <property type="entry name" value="Ribosomal_uL6_CS"/>
</dbReference>
<dbReference type="NCBIfam" id="TIGR03654">
    <property type="entry name" value="L6_bact"/>
    <property type="match status" value="1"/>
</dbReference>
<dbReference type="PANTHER" id="PTHR11655">
    <property type="entry name" value="60S/50S RIBOSOMAL PROTEIN L6/L9"/>
    <property type="match status" value="1"/>
</dbReference>
<dbReference type="PANTHER" id="PTHR11655:SF14">
    <property type="entry name" value="LARGE RIBOSOMAL SUBUNIT PROTEIN UL6M"/>
    <property type="match status" value="1"/>
</dbReference>
<dbReference type="Pfam" id="PF00347">
    <property type="entry name" value="Ribosomal_L6"/>
    <property type="match status" value="2"/>
</dbReference>
<dbReference type="PIRSF" id="PIRSF002162">
    <property type="entry name" value="Ribosomal_L6"/>
    <property type="match status" value="1"/>
</dbReference>
<dbReference type="PRINTS" id="PR00059">
    <property type="entry name" value="RIBOSOMALL6"/>
</dbReference>
<dbReference type="SUPFAM" id="SSF56053">
    <property type="entry name" value="Ribosomal protein L6"/>
    <property type="match status" value="2"/>
</dbReference>
<dbReference type="PROSITE" id="PS00525">
    <property type="entry name" value="RIBOSOMAL_L6_1"/>
    <property type="match status" value="1"/>
</dbReference>
<protein>
    <recommendedName>
        <fullName evidence="1">Large ribosomal subunit protein uL6</fullName>
    </recommendedName>
    <alternativeName>
        <fullName evidence="2">50S ribosomal protein L6</fullName>
    </alternativeName>
</protein>